<gene>
    <name evidence="1" type="primary">ilvC</name>
    <name evidence="7" type="ordered locus">Aaci_2227</name>
</gene>
<sequence length="344" mass="37909">MEKIYYDADISIQPLADKRIAVIGYGSQGHAHAQNLRDSGFDVVIGLRPGSSWAKAEADGFRVMAVGEAVEESDVIMILLPDERQPAVYEREIRPYLTAGKALAFAHGFNIHFSQIQPPKDVDVFMVAPKGPGHLVRRVYEAGGGVPALIAVHQDASGQAKDLALAYARGIGAGRAGILTTTFREETETDLFGEQAVLCGGLSALIKAGFETLVEAGYQPEIAYFECLHEMKLIVDLIYEGGLEYMRYSISDTAQWGDFTSGPRIINEETKKEMRRILADIQSGAFAKSWILENQANRPMFNAINRRELEHPIEVVGRKLRSMMPFIKAKRPGDDRVPATADRA</sequence>
<proteinExistence type="evidence at protein level"/>
<protein>
    <recommendedName>
        <fullName evidence="1 5">Ketol-acid reductoisomerase (NADP(+))</fullName>
        <shortName evidence="1 5">KARI</shortName>
        <ecNumber evidence="1 6">1.1.1.86</ecNumber>
    </recommendedName>
    <alternativeName>
        <fullName evidence="1">Acetohydroxy-acid isomeroreductase</fullName>
        <shortName evidence="1">AHIR</shortName>
    </alternativeName>
    <alternativeName>
        <fullName evidence="1">Alpha-keto-beta-hydroxylacyl reductoisomerase</fullName>
    </alternativeName>
    <alternativeName>
        <fullName evidence="1 5">Ketol-acid reductoisomerase type 1</fullName>
    </alternativeName>
    <alternativeName>
        <fullName evidence="1 5">Ketol-acid reductoisomerase type I</fullName>
    </alternativeName>
</protein>
<reference key="1">
    <citation type="submission" date="2009-09" db="EMBL/GenBank/DDBJ databases">
        <title>The complete chromosome of Alicyclobacillus acidocaldarius subsp. acidocaldarius DSM 446.</title>
        <authorList>
            <consortium name="US DOE Joint Genome Institute (JGI-PGF)"/>
            <person name="Lucas S."/>
            <person name="Copeland A."/>
            <person name="Lapidus A."/>
            <person name="Glavina del Rio T."/>
            <person name="Dalin E."/>
            <person name="Tice H."/>
            <person name="Bruce D."/>
            <person name="Goodwin L."/>
            <person name="Pitluck S."/>
            <person name="Kyrpides N."/>
            <person name="Mavromatis K."/>
            <person name="Ivanova N."/>
            <person name="Ovchinnikova G."/>
            <person name="Chertkov O."/>
            <person name="Sims D."/>
            <person name="Brettin T."/>
            <person name="Detter J.C."/>
            <person name="Han C."/>
            <person name="Larimer F."/>
            <person name="Land M."/>
            <person name="Hauser L."/>
            <person name="Markowitz V."/>
            <person name="Cheng J.-F."/>
            <person name="Hugenholtz P."/>
            <person name="Woyke T."/>
            <person name="Wu D."/>
            <person name="Pukall R."/>
            <person name="Klenk H.-P."/>
            <person name="Eisen J.A."/>
        </authorList>
    </citation>
    <scope>NUCLEOTIDE SEQUENCE [LARGE SCALE GENOMIC DNA]</scope>
    <source>
        <strain>ATCC 27009 / DSM 446 / BCRC 14685 / JCM 5260 / KCTC 1825 / NBRC 15652 / NCIMB 11725 / NRRL B-14509 / 104-IA</strain>
    </source>
</reference>
<reference key="2">
    <citation type="journal article" date="2015" name="Biochem. J.">
        <title>Cofactor specificity motifs and the induced fit mechanism in class I ketol-acid reductoisomerases.</title>
        <authorList>
            <person name="Cahn J.K."/>
            <person name="Brinkmann-Chen S."/>
            <person name="Spatzal T."/>
            <person name="Wiig J.A."/>
            <person name="Buller A.R."/>
            <person name="Einsle O."/>
            <person name="Hu Y."/>
            <person name="Ribbe M.W."/>
            <person name="Arnold F.H."/>
        </authorList>
    </citation>
    <scope>X-RAY CRYSTALLOGRAPHY (2.50 ANGSTROMS) IN COMPLEX WITH MAGNESIUM IONS AND NADP ANALOG</scope>
    <scope>FUNCTION</scope>
    <scope>MUTAGENESIS OF ARG-48 AND SER-52</scope>
    <scope>COFACTOR</scope>
</reference>
<dbReference type="EC" id="1.1.1.86" evidence="1 6"/>
<dbReference type="EMBL" id="CP001727">
    <property type="protein sequence ID" value="ACV59236.1"/>
    <property type="molecule type" value="Genomic_DNA"/>
</dbReference>
<dbReference type="RefSeq" id="WP_012811489.1">
    <property type="nucleotide sequence ID" value="NC_013205.1"/>
</dbReference>
<dbReference type="PDB" id="4TSK">
    <property type="method" value="X-ray"/>
    <property type="resolution" value="2.50 A"/>
    <property type="chains" value="A=1-344"/>
</dbReference>
<dbReference type="PDBsum" id="4TSK"/>
<dbReference type="SMR" id="C8WR67"/>
<dbReference type="STRING" id="521098.Aaci_2227"/>
<dbReference type="KEGG" id="aac:Aaci_2227"/>
<dbReference type="eggNOG" id="COG0059">
    <property type="taxonomic scope" value="Bacteria"/>
</dbReference>
<dbReference type="HOGENOM" id="CLU_033821_0_1_9"/>
<dbReference type="BRENDA" id="1.1.1.382">
    <property type="organism ID" value="14587"/>
</dbReference>
<dbReference type="BRENDA" id="1.1.1.86">
    <property type="organism ID" value="14587"/>
</dbReference>
<dbReference type="UniPathway" id="UPA00047">
    <property type="reaction ID" value="UER00056"/>
</dbReference>
<dbReference type="UniPathway" id="UPA00049">
    <property type="reaction ID" value="UER00060"/>
</dbReference>
<dbReference type="EvolutionaryTrace" id="C8WR67"/>
<dbReference type="Proteomes" id="UP000001917">
    <property type="component" value="Chromosome"/>
</dbReference>
<dbReference type="GO" id="GO:0005829">
    <property type="term" value="C:cytosol"/>
    <property type="evidence" value="ECO:0007669"/>
    <property type="project" value="TreeGrafter"/>
</dbReference>
<dbReference type="GO" id="GO:0004455">
    <property type="term" value="F:ketol-acid reductoisomerase activity"/>
    <property type="evidence" value="ECO:0007669"/>
    <property type="project" value="UniProtKB-UniRule"/>
</dbReference>
<dbReference type="GO" id="GO:0000287">
    <property type="term" value="F:magnesium ion binding"/>
    <property type="evidence" value="ECO:0007669"/>
    <property type="project" value="UniProtKB-UniRule"/>
</dbReference>
<dbReference type="GO" id="GO:0050661">
    <property type="term" value="F:NADP binding"/>
    <property type="evidence" value="ECO:0007669"/>
    <property type="project" value="InterPro"/>
</dbReference>
<dbReference type="GO" id="GO:0009097">
    <property type="term" value="P:isoleucine biosynthetic process"/>
    <property type="evidence" value="ECO:0007669"/>
    <property type="project" value="UniProtKB-UniRule"/>
</dbReference>
<dbReference type="GO" id="GO:0009099">
    <property type="term" value="P:L-valine biosynthetic process"/>
    <property type="evidence" value="ECO:0007669"/>
    <property type="project" value="UniProtKB-UniRule"/>
</dbReference>
<dbReference type="FunFam" id="3.40.50.720:FF:000023">
    <property type="entry name" value="Ketol-acid reductoisomerase (NADP(+))"/>
    <property type="match status" value="1"/>
</dbReference>
<dbReference type="Gene3D" id="6.10.240.10">
    <property type="match status" value="1"/>
</dbReference>
<dbReference type="Gene3D" id="3.40.50.720">
    <property type="entry name" value="NAD(P)-binding Rossmann-like Domain"/>
    <property type="match status" value="1"/>
</dbReference>
<dbReference type="HAMAP" id="MF_00435">
    <property type="entry name" value="IlvC"/>
    <property type="match status" value="1"/>
</dbReference>
<dbReference type="InterPro" id="IPR008927">
    <property type="entry name" value="6-PGluconate_DH-like_C_sf"/>
</dbReference>
<dbReference type="InterPro" id="IPR013023">
    <property type="entry name" value="KARI"/>
</dbReference>
<dbReference type="InterPro" id="IPR000506">
    <property type="entry name" value="KARI_C"/>
</dbReference>
<dbReference type="InterPro" id="IPR013116">
    <property type="entry name" value="KARI_N"/>
</dbReference>
<dbReference type="InterPro" id="IPR014359">
    <property type="entry name" value="KARI_prok"/>
</dbReference>
<dbReference type="InterPro" id="IPR036291">
    <property type="entry name" value="NAD(P)-bd_dom_sf"/>
</dbReference>
<dbReference type="NCBIfam" id="TIGR00465">
    <property type="entry name" value="ilvC"/>
    <property type="match status" value="1"/>
</dbReference>
<dbReference type="NCBIfam" id="NF004017">
    <property type="entry name" value="PRK05479.1"/>
    <property type="match status" value="1"/>
</dbReference>
<dbReference type="NCBIfam" id="NF009940">
    <property type="entry name" value="PRK13403.1"/>
    <property type="match status" value="1"/>
</dbReference>
<dbReference type="PANTHER" id="PTHR21371">
    <property type="entry name" value="KETOL-ACID REDUCTOISOMERASE, MITOCHONDRIAL"/>
    <property type="match status" value="1"/>
</dbReference>
<dbReference type="PANTHER" id="PTHR21371:SF1">
    <property type="entry name" value="KETOL-ACID REDUCTOISOMERASE, MITOCHONDRIAL"/>
    <property type="match status" value="1"/>
</dbReference>
<dbReference type="Pfam" id="PF01450">
    <property type="entry name" value="KARI_C"/>
    <property type="match status" value="1"/>
</dbReference>
<dbReference type="Pfam" id="PF07991">
    <property type="entry name" value="KARI_N"/>
    <property type="match status" value="1"/>
</dbReference>
<dbReference type="PIRSF" id="PIRSF000116">
    <property type="entry name" value="IlvC_gammaproteo"/>
    <property type="match status" value="1"/>
</dbReference>
<dbReference type="SUPFAM" id="SSF48179">
    <property type="entry name" value="6-phosphogluconate dehydrogenase C-terminal domain-like"/>
    <property type="match status" value="1"/>
</dbReference>
<dbReference type="SUPFAM" id="SSF51735">
    <property type="entry name" value="NAD(P)-binding Rossmann-fold domains"/>
    <property type="match status" value="1"/>
</dbReference>
<dbReference type="PROSITE" id="PS51851">
    <property type="entry name" value="KARI_C"/>
    <property type="match status" value="1"/>
</dbReference>
<dbReference type="PROSITE" id="PS51850">
    <property type="entry name" value="KARI_N"/>
    <property type="match status" value="1"/>
</dbReference>
<keyword id="KW-0002">3D-structure</keyword>
<keyword id="KW-0028">Amino-acid biosynthesis</keyword>
<keyword id="KW-0100">Branched-chain amino acid biosynthesis</keyword>
<keyword id="KW-0460">Magnesium</keyword>
<keyword id="KW-0479">Metal-binding</keyword>
<keyword id="KW-0521">NADP</keyword>
<keyword id="KW-0560">Oxidoreductase</keyword>
<keyword id="KW-1185">Reference proteome</keyword>
<comment type="function">
    <text evidence="1 4">Involved in the biosynthesis of branched-chain amino acids (BCAA). Catalyzes an alkyl-migration followed by a ketol-acid reduction of (S)-2-acetolactate (S2AL) to yield (R)-2,3-dihydroxy-isovalerate. In the isomerase reaction, S2AL is rearranged via a Mg-dependent methyl migration to produce 3-hydroxy-3-methyl-2-ketobutyrate (HMKB). In the reductase reaction, this 2-ketoacid undergoes a metal-dependent reduction by NADPH to yield (R)-2,3-dihydroxy-isovalerate.</text>
</comment>
<comment type="catalytic activity">
    <reaction evidence="1 6">
        <text>(2R)-2,3-dihydroxy-3-methylbutanoate + NADP(+) = (2S)-2-acetolactate + NADPH + H(+)</text>
        <dbReference type="Rhea" id="RHEA:22068"/>
        <dbReference type="ChEBI" id="CHEBI:15378"/>
        <dbReference type="ChEBI" id="CHEBI:49072"/>
        <dbReference type="ChEBI" id="CHEBI:57783"/>
        <dbReference type="ChEBI" id="CHEBI:58349"/>
        <dbReference type="ChEBI" id="CHEBI:58476"/>
        <dbReference type="EC" id="1.1.1.86"/>
    </reaction>
</comment>
<comment type="catalytic activity">
    <reaction evidence="1">
        <text>(2R,3R)-2,3-dihydroxy-3-methylpentanoate + NADP(+) = (S)-2-ethyl-2-hydroxy-3-oxobutanoate + NADPH + H(+)</text>
        <dbReference type="Rhea" id="RHEA:13493"/>
        <dbReference type="ChEBI" id="CHEBI:15378"/>
        <dbReference type="ChEBI" id="CHEBI:49256"/>
        <dbReference type="ChEBI" id="CHEBI:49258"/>
        <dbReference type="ChEBI" id="CHEBI:57783"/>
        <dbReference type="ChEBI" id="CHEBI:58349"/>
        <dbReference type="EC" id="1.1.1.86"/>
    </reaction>
</comment>
<comment type="cofactor">
    <cofactor evidence="1 4">
        <name>Mg(2+)</name>
        <dbReference type="ChEBI" id="CHEBI:18420"/>
    </cofactor>
    <text evidence="1 4">Binds 2 magnesium ions per subunit.</text>
</comment>
<comment type="pathway">
    <text evidence="1">Amino-acid biosynthesis; L-isoleucine biosynthesis; L-isoleucine from 2-oxobutanoate: step 2/4.</text>
</comment>
<comment type="pathway">
    <text evidence="1">Amino-acid biosynthesis; L-valine biosynthesis; L-valine from pyruvate: step 2/4.</text>
</comment>
<comment type="similarity">
    <text evidence="1">Belongs to the ketol-acid reductoisomerase family.</text>
</comment>
<name>ILVC_ALIAD</name>
<organism>
    <name type="scientific">Alicyclobacillus acidocaldarius subsp. acidocaldarius (strain ATCC 27009 / DSM 446 / BCRC 14685 / JCM 5260 / KCTC 1825 / NBRC 15652 / NCIMB 11725 / NRRL B-14509 / 104-IA)</name>
    <name type="common">Bacillus acidocaldarius</name>
    <dbReference type="NCBI Taxonomy" id="521098"/>
    <lineage>
        <taxon>Bacteria</taxon>
        <taxon>Bacillati</taxon>
        <taxon>Bacillota</taxon>
        <taxon>Bacilli</taxon>
        <taxon>Bacillales</taxon>
        <taxon>Alicyclobacillaceae</taxon>
        <taxon>Alicyclobacillus</taxon>
    </lineage>
</organism>
<accession>C8WR67</accession>
<feature type="chain" id="PRO_0000436831" description="Ketol-acid reductoisomerase (NADP(+))">
    <location>
        <begin position="1"/>
        <end position="344"/>
    </location>
</feature>
<feature type="domain" description="KARI N-terminal Rossmann" evidence="2">
    <location>
        <begin position="2"/>
        <end position="181"/>
    </location>
</feature>
<feature type="domain" description="KARI C-terminal knotted" evidence="3">
    <location>
        <begin position="182"/>
        <end position="327"/>
    </location>
</feature>
<feature type="active site" evidence="1">
    <location>
        <position position="107"/>
    </location>
</feature>
<feature type="binding site" evidence="1 4">
    <location>
        <begin position="25"/>
        <end position="28"/>
    </location>
    <ligand>
        <name>NADP(+)</name>
        <dbReference type="ChEBI" id="CHEBI:58349"/>
    </ligand>
</feature>
<feature type="binding site" evidence="1 4">
    <location>
        <position position="48"/>
    </location>
    <ligand>
        <name>NADP(+)</name>
        <dbReference type="ChEBI" id="CHEBI:58349"/>
    </ligand>
</feature>
<feature type="binding site" evidence="1 4">
    <location>
        <position position="52"/>
    </location>
    <ligand>
        <name>NADP(+)</name>
        <dbReference type="ChEBI" id="CHEBI:58349"/>
    </ligand>
</feature>
<feature type="binding site" evidence="1 4">
    <location>
        <begin position="82"/>
        <end position="85"/>
    </location>
    <ligand>
        <name>NADP(+)</name>
        <dbReference type="ChEBI" id="CHEBI:58349"/>
    </ligand>
</feature>
<feature type="binding site" evidence="1 4">
    <location>
        <position position="133"/>
    </location>
    <ligand>
        <name>NADP(+)</name>
        <dbReference type="ChEBI" id="CHEBI:58349"/>
    </ligand>
</feature>
<feature type="binding site" evidence="1 4">
    <location>
        <position position="190"/>
    </location>
    <ligand>
        <name>Mg(2+)</name>
        <dbReference type="ChEBI" id="CHEBI:18420"/>
        <label>1</label>
    </ligand>
</feature>
<feature type="binding site" evidence="1">
    <location>
        <position position="190"/>
    </location>
    <ligand>
        <name>Mg(2+)</name>
        <dbReference type="ChEBI" id="CHEBI:18420"/>
        <label>2</label>
    </ligand>
</feature>
<feature type="binding site" evidence="1 4">
    <location>
        <position position="194"/>
    </location>
    <ligand>
        <name>Mg(2+)</name>
        <dbReference type="ChEBI" id="CHEBI:18420"/>
        <label>1</label>
    </ligand>
</feature>
<feature type="binding site" evidence="1 4">
    <location>
        <position position="226"/>
    </location>
    <ligand>
        <name>Mg(2+)</name>
        <dbReference type="ChEBI" id="CHEBI:18420"/>
        <label>2</label>
    </ligand>
</feature>
<feature type="binding site" evidence="1">
    <location>
        <position position="230"/>
    </location>
    <ligand>
        <name>Mg(2+)</name>
        <dbReference type="ChEBI" id="CHEBI:18420"/>
        <label>2</label>
    </ligand>
</feature>
<feature type="binding site" evidence="1">
    <location>
        <position position="251"/>
    </location>
    <ligand>
        <name>substrate</name>
    </ligand>
</feature>
<feature type="mutagenesis site" description="Inversion of the cofactor specificity from NADPH to NADH." evidence="4">
    <original>R</original>
    <variation>P</variation>
    <location>
        <position position="48"/>
    </location>
</feature>
<feature type="mutagenesis site" description="Inversion of the cofactor specificity from NADPH to NADH." evidence="4">
    <original>S</original>
    <variation>D</variation>
    <location>
        <position position="52"/>
    </location>
</feature>
<feature type="helix" evidence="8">
    <location>
        <begin position="7"/>
        <end position="9"/>
    </location>
</feature>
<feature type="helix" evidence="8">
    <location>
        <begin position="13"/>
        <end position="16"/>
    </location>
</feature>
<feature type="strand" evidence="8">
    <location>
        <begin position="19"/>
        <end position="23"/>
    </location>
</feature>
<feature type="helix" evidence="8">
    <location>
        <begin position="27"/>
        <end position="38"/>
    </location>
</feature>
<feature type="strand" evidence="8">
    <location>
        <begin position="42"/>
        <end position="47"/>
    </location>
</feature>
<feature type="helix" evidence="8">
    <location>
        <begin position="51"/>
        <end position="58"/>
    </location>
</feature>
<feature type="strand" evidence="8">
    <location>
        <begin position="63"/>
        <end position="65"/>
    </location>
</feature>
<feature type="helix" evidence="8">
    <location>
        <begin position="66"/>
        <end position="72"/>
    </location>
</feature>
<feature type="strand" evidence="8">
    <location>
        <begin position="74"/>
        <end position="78"/>
    </location>
</feature>
<feature type="helix" evidence="8">
    <location>
        <begin position="82"/>
        <end position="84"/>
    </location>
</feature>
<feature type="helix" evidence="8">
    <location>
        <begin position="85"/>
        <end position="92"/>
    </location>
</feature>
<feature type="helix" evidence="8">
    <location>
        <begin position="94"/>
        <end position="96"/>
    </location>
</feature>
<feature type="strand" evidence="8">
    <location>
        <begin position="102"/>
        <end position="108"/>
    </location>
</feature>
<feature type="helix" evidence="8">
    <location>
        <begin position="109"/>
        <end position="112"/>
    </location>
</feature>
<feature type="strand" evidence="8">
    <location>
        <begin position="122"/>
        <end position="131"/>
    </location>
</feature>
<feature type="helix" evidence="8">
    <location>
        <begin position="133"/>
        <end position="141"/>
    </location>
</feature>
<feature type="strand" evidence="8">
    <location>
        <begin position="148"/>
        <end position="154"/>
    </location>
</feature>
<feature type="strand" evidence="8">
    <location>
        <begin position="156"/>
        <end position="158"/>
    </location>
</feature>
<feature type="helix" evidence="8">
    <location>
        <begin position="160"/>
        <end position="170"/>
    </location>
</feature>
<feature type="helix" evidence="8">
    <location>
        <begin position="173"/>
        <end position="175"/>
    </location>
</feature>
<feature type="strand" evidence="8">
    <location>
        <begin position="178"/>
        <end position="180"/>
    </location>
</feature>
<feature type="helix" evidence="8">
    <location>
        <begin position="183"/>
        <end position="196"/>
    </location>
</feature>
<feature type="turn" evidence="8">
    <location>
        <begin position="197"/>
        <end position="199"/>
    </location>
</feature>
<feature type="helix" evidence="8">
    <location>
        <begin position="200"/>
        <end position="215"/>
    </location>
</feature>
<feature type="helix" evidence="8">
    <location>
        <begin position="220"/>
        <end position="227"/>
    </location>
</feature>
<feature type="helix" evidence="8">
    <location>
        <begin position="229"/>
        <end position="249"/>
    </location>
</feature>
<feature type="helix" evidence="8">
    <location>
        <begin position="252"/>
        <end position="265"/>
    </location>
</feature>
<feature type="helix" evidence="8">
    <location>
        <begin position="268"/>
        <end position="282"/>
    </location>
</feature>
<feature type="helix" evidence="8">
    <location>
        <begin position="285"/>
        <end position="295"/>
    </location>
</feature>
<feature type="helix" evidence="8">
    <location>
        <begin position="299"/>
        <end position="309"/>
    </location>
</feature>
<feature type="helix" evidence="8">
    <location>
        <begin position="312"/>
        <end position="322"/>
    </location>
</feature>
<evidence type="ECO:0000255" key="1">
    <source>
        <dbReference type="HAMAP-Rule" id="MF_00435"/>
    </source>
</evidence>
<evidence type="ECO:0000255" key="2">
    <source>
        <dbReference type="PROSITE-ProRule" id="PRU01197"/>
    </source>
</evidence>
<evidence type="ECO:0000255" key="3">
    <source>
        <dbReference type="PROSITE-ProRule" id="PRU01198"/>
    </source>
</evidence>
<evidence type="ECO:0000269" key="4">
    <source>
    </source>
</evidence>
<evidence type="ECO:0000303" key="5">
    <source>
    </source>
</evidence>
<evidence type="ECO:0000305" key="6">
    <source>
    </source>
</evidence>
<evidence type="ECO:0000312" key="7">
    <source>
        <dbReference type="EMBL" id="ACV59236.1"/>
    </source>
</evidence>
<evidence type="ECO:0007829" key="8">
    <source>
        <dbReference type="PDB" id="4TSK"/>
    </source>
</evidence>